<dbReference type="EMBL" id="CP000880">
    <property type="protein sequence ID" value="ABX24116.1"/>
    <property type="status" value="ALT_INIT"/>
    <property type="molecule type" value="Genomic_DNA"/>
</dbReference>
<dbReference type="SMR" id="A9MP34"/>
<dbReference type="STRING" id="41514.SARI_04336"/>
<dbReference type="KEGG" id="ses:SARI_04336"/>
<dbReference type="HOGENOM" id="CLU_070525_1_1_6"/>
<dbReference type="Proteomes" id="UP000002084">
    <property type="component" value="Chromosome"/>
</dbReference>
<dbReference type="GO" id="GO:0005829">
    <property type="term" value="C:cytosol"/>
    <property type="evidence" value="ECO:0007669"/>
    <property type="project" value="TreeGrafter"/>
</dbReference>
<dbReference type="GO" id="GO:0000028">
    <property type="term" value="P:ribosomal small subunit assembly"/>
    <property type="evidence" value="ECO:0007669"/>
    <property type="project" value="TreeGrafter"/>
</dbReference>
<dbReference type="GO" id="GO:0006412">
    <property type="term" value="P:translation"/>
    <property type="evidence" value="ECO:0007669"/>
    <property type="project" value="TreeGrafter"/>
</dbReference>
<dbReference type="CDD" id="cd01734">
    <property type="entry name" value="YlxS_C"/>
    <property type="match status" value="1"/>
</dbReference>
<dbReference type="FunFam" id="2.30.30.180:FF:000001">
    <property type="entry name" value="Ribosome maturation factor RimP"/>
    <property type="match status" value="1"/>
</dbReference>
<dbReference type="FunFam" id="3.30.300.70:FF:000001">
    <property type="entry name" value="Ribosome maturation factor RimP"/>
    <property type="match status" value="1"/>
</dbReference>
<dbReference type="Gene3D" id="2.30.30.180">
    <property type="entry name" value="Ribosome maturation factor RimP, C-terminal domain"/>
    <property type="match status" value="1"/>
</dbReference>
<dbReference type="Gene3D" id="3.30.300.70">
    <property type="entry name" value="RimP-like superfamily, N-terminal"/>
    <property type="match status" value="1"/>
</dbReference>
<dbReference type="HAMAP" id="MF_01077">
    <property type="entry name" value="RimP"/>
    <property type="match status" value="1"/>
</dbReference>
<dbReference type="InterPro" id="IPR003728">
    <property type="entry name" value="Ribosome_maturation_RimP"/>
</dbReference>
<dbReference type="InterPro" id="IPR028998">
    <property type="entry name" value="RimP_C"/>
</dbReference>
<dbReference type="InterPro" id="IPR036847">
    <property type="entry name" value="RimP_C_sf"/>
</dbReference>
<dbReference type="InterPro" id="IPR028989">
    <property type="entry name" value="RimP_N"/>
</dbReference>
<dbReference type="InterPro" id="IPR035956">
    <property type="entry name" value="RimP_N_sf"/>
</dbReference>
<dbReference type="NCBIfam" id="NF000927">
    <property type="entry name" value="PRK00092.1-1"/>
    <property type="match status" value="1"/>
</dbReference>
<dbReference type="PANTHER" id="PTHR33867">
    <property type="entry name" value="RIBOSOME MATURATION FACTOR RIMP"/>
    <property type="match status" value="1"/>
</dbReference>
<dbReference type="PANTHER" id="PTHR33867:SF1">
    <property type="entry name" value="RIBOSOME MATURATION FACTOR RIMP"/>
    <property type="match status" value="1"/>
</dbReference>
<dbReference type="Pfam" id="PF17384">
    <property type="entry name" value="DUF150_C"/>
    <property type="match status" value="1"/>
</dbReference>
<dbReference type="Pfam" id="PF02576">
    <property type="entry name" value="RimP_N"/>
    <property type="match status" value="1"/>
</dbReference>
<dbReference type="SUPFAM" id="SSF74942">
    <property type="entry name" value="YhbC-like, C-terminal domain"/>
    <property type="match status" value="1"/>
</dbReference>
<dbReference type="SUPFAM" id="SSF75420">
    <property type="entry name" value="YhbC-like, N-terminal domain"/>
    <property type="match status" value="1"/>
</dbReference>
<proteinExistence type="inferred from homology"/>
<evidence type="ECO:0000255" key="1">
    <source>
        <dbReference type="HAMAP-Rule" id="MF_01077"/>
    </source>
</evidence>
<evidence type="ECO:0000305" key="2"/>
<gene>
    <name evidence="1" type="primary">rimP</name>
    <name type="ordered locus">SARI_04336</name>
</gene>
<reference key="1">
    <citation type="submission" date="2007-11" db="EMBL/GenBank/DDBJ databases">
        <authorList>
            <consortium name="The Salmonella enterica serovar Arizonae Genome Sequencing Project"/>
            <person name="McClelland M."/>
            <person name="Sanderson E.K."/>
            <person name="Porwollik S."/>
            <person name="Spieth J."/>
            <person name="Clifton W.S."/>
            <person name="Fulton R."/>
            <person name="Chunyan W."/>
            <person name="Wollam A."/>
            <person name="Shah N."/>
            <person name="Pepin K."/>
            <person name="Bhonagiri V."/>
            <person name="Nash W."/>
            <person name="Johnson M."/>
            <person name="Thiruvilangam P."/>
            <person name="Wilson R."/>
        </authorList>
    </citation>
    <scope>NUCLEOTIDE SEQUENCE [LARGE SCALE GENOMIC DNA]</scope>
    <source>
        <strain>ATCC BAA-731 / CDC346-86 / RSK2980</strain>
    </source>
</reference>
<sequence>MGLSTLEQKLTEMITAPVEALGYELVGIEFIRGRTSTLRIYIDSEDGINVDDCADVSHQVSAVLDVEDPISVAYNLEVSSPGLDRPMFTADHYARFQGEEVALVLRMAVQNRRKWQGIIKAVDGEMITVTVEGKDEVFALSNIQKANLVPHF</sequence>
<feature type="chain" id="PRO_0000384758" description="Ribosome maturation factor RimP">
    <location>
        <begin position="1"/>
        <end position="152"/>
    </location>
</feature>
<accession>A9MP34</accession>
<protein>
    <recommendedName>
        <fullName evidence="1">Ribosome maturation factor RimP</fullName>
    </recommendedName>
</protein>
<organism>
    <name type="scientific">Salmonella arizonae (strain ATCC BAA-731 / CDC346-86 / RSK2980)</name>
    <dbReference type="NCBI Taxonomy" id="41514"/>
    <lineage>
        <taxon>Bacteria</taxon>
        <taxon>Pseudomonadati</taxon>
        <taxon>Pseudomonadota</taxon>
        <taxon>Gammaproteobacteria</taxon>
        <taxon>Enterobacterales</taxon>
        <taxon>Enterobacteriaceae</taxon>
        <taxon>Salmonella</taxon>
    </lineage>
</organism>
<comment type="function">
    <text evidence="1">Required for maturation of 30S ribosomal subunits.</text>
</comment>
<comment type="subcellular location">
    <subcellularLocation>
        <location evidence="1">Cytoplasm</location>
    </subcellularLocation>
</comment>
<comment type="similarity">
    <text evidence="1">Belongs to the RimP family.</text>
</comment>
<comment type="sequence caution" evidence="2">
    <conflict type="erroneous initiation">
        <sequence resource="EMBL-CDS" id="ABX24116"/>
    </conflict>
</comment>
<name>RIMP_SALAR</name>
<keyword id="KW-0963">Cytoplasm</keyword>
<keyword id="KW-1185">Reference proteome</keyword>
<keyword id="KW-0690">Ribosome biogenesis</keyword>